<sequence>MVKESDILVIGGGHAGIEASLIAAKMGARVHLITMLIDTIGLASCNPAIGGLGKGHLTKEVDVLGGAMGIITDNSGLQYRVLNASKGPAVRGTRAQIDMDTYRILARNLVLNTPNLSVSQEMTESLIVENGEIVGVTTNINNTYKAKKVIITTGTFLKGVVHIGEHQNQNGRFGENASNSLALNLRELGFKVERLKTGTCPRVAGNSIDFEGLEEHFGDTNPPYFSYKTKDFNPTQLSCFITYTNPITHQIIRDNFHRAPLFSGQIEGIGPRYCPSIEDKINRFSEKERHQLFLEPQTIHKSEYYINGLSTSLPLDVQEKVIHSIKGLENALITRYGYAIEYDFIQPTELTHTLETKKIKGLYLAGQINGTTGYEEAAAQGLMAGINAVLALKNQAPFILKRNEAYIGVLIDDLVTKGTNEPYRMFTSRAEYRLLLREDNTLFRLGEHAYRLGLMEEDFYKELKKDQQAIQENLKRLRECVLTPSKEVLKRLNELDENPINDKVDGVSLLARDSFNLEKMRSFFSFLAPLNERVLEQIKIECKYNIYIEKQHENIAKMDSMLKVSIPKDFVFKGIPGLSLEAVEKLEKFRPKSLFEASEISGITPANLDVLHLYIHLRKNS</sequence>
<keyword id="KW-0963">Cytoplasm</keyword>
<keyword id="KW-0274">FAD</keyword>
<keyword id="KW-0285">Flavoprotein</keyword>
<keyword id="KW-0520">NAD</keyword>
<keyword id="KW-0819">tRNA processing</keyword>
<evidence type="ECO:0000255" key="1">
    <source>
        <dbReference type="HAMAP-Rule" id="MF_00129"/>
    </source>
</evidence>
<organism>
    <name type="scientific">Helicobacter pylori (strain P12)</name>
    <dbReference type="NCBI Taxonomy" id="570508"/>
    <lineage>
        <taxon>Bacteria</taxon>
        <taxon>Pseudomonadati</taxon>
        <taxon>Campylobacterota</taxon>
        <taxon>Epsilonproteobacteria</taxon>
        <taxon>Campylobacterales</taxon>
        <taxon>Helicobacteraceae</taxon>
        <taxon>Helicobacter</taxon>
    </lineage>
</organism>
<name>MNMG_HELP2</name>
<comment type="function">
    <text evidence="1">NAD-binding protein involved in the addition of a carboxymethylaminomethyl (cmnm) group at the wobble position (U34) of certain tRNAs, forming tRNA-cmnm(5)s(2)U34.</text>
</comment>
<comment type="cofactor">
    <cofactor evidence="1">
        <name>FAD</name>
        <dbReference type="ChEBI" id="CHEBI:57692"/>
    </cofactor>
</comment>
<comment type="subunit">
    <text evidence="1">Homodimer. Heterotetramer of two MnmE and two MnmG subunits.</text>
</comment>
<comment type="subcellular location">
    <subcellularLocation>
        <location evidence="1">Cytoplasm</location>
    </subcellularLocation>
</comment>
<comment type="similarity">
    <text evidence="1">Belongs to the MnmG family.</text>
</comment>
<dbReference type="EMBL" id="CP001217">
    <property type="protein sequence ID" value="ACJ07373.1"/>
    <property type="molecule type" value="Genomic_DNA"/>
</dbReference>
<dbReference type="SMR" id="B6JKE5"/>
<dbReference type="KEGG" id="hpp:HPP12_0214"/>
<dbReference type="HOGENOM" id="CLU_007831_2_2_7"/>
<dbReference type="Proteomes" id="UP000008198">
    <property type="component" value="Chromosome"/>
</dbReference>
<dbReference type="GO" id="GO:0005829">
    <property type="term" value="C:cytosol"/>
    <property type="evidence" value="ECO:0007669"/>
    <property type="project" value="TreeGrafter"/>
</dbReference>
<dbReference type="GO" id="GO:0050660">
    <property type="term" value="F:flavin adenine dinucleotide binding"/>
    <property type="evidence" value="ECO:0007669"/>
    <property type="project" value="UniProtKB-UniRule"/>
</dbReference>
<dbReference type="GO" id="GO:0030488">
    <property type="term" value="P:tRNA methylation"/>
    <property type="evidence" value="ECO:0007669"/>
    <property type="project" value="TreeGrafter"/>
</dbReference>
<dbReference type="GO" id="GO:0002098">
    <property type="term" value="P:tRNA wobble uridine modification"/>
    <property type="evidence" value="ECO:0007669"/>
    <property type="project" value="InterPro"/>
</dbReference>
<dbReference type="FunFam" id="1.10.150.570:FF:000001">
    <property type="entry name" value="tRNA uridine 5-carboxymethylaminomethyl modification enzyme MnmG"/>
    <property type="match status" value="1"/>
</dbReference>
<dbReference type="FunFam" id="3.50.50.60:FF:000002">
    <property type="entry name" value="tRNA uridine 5-carboxymethylaminomethyl modification enzyme MnmG"/>
    <property type="match status" value="1"/>
</dbReference>
<dbReference type="Gene3D" id="3.50.50.60">
    <property type="entry name" value="FAD/NAD(P)-binding domain"/>
    <property type="match status" value="2"/>
</dbReference>
<dbReference type="Gene3D" id="1.10.150.570">
    <property type="entry name" value="GidA associated domain, C-terminal subdomain"/>
    <property type="match status" value="1"/>
</dbReference>
<dbReference type="Gene3D" id="1.10.10.1800">
    <property type="entry name" value="tRNA uridine 5-carboxymethylaminomethyl modification enzyme MnmG/GidA"/>
    <property type="match status" value="1"/>
</dbReference>
<dbReference type="HAMAP" id="MF_00129">
    <property type="entry name" value="MnmG_GidA"/>
    <property type="match status" value="1"/>
</dbReference>
<dbReference type="InterPro" id="IPR036188">
    <property type="entry name" value="FAD/NAD-bd_sf"/>
</dbReference>
<dbReference type="InterPro" id="IPR049312">
    <property type="entry name" value="GIDA_C_N"/>
</dbReference>
<dbReference type="InterPro" id="IPR004416">
    <property type="entry name" value="MnmG"/>
</dbReference>
<dbReference type="InterPro" id="IPR002218">
    <property type="entry name" value="MnmG-rel"/>
</dbReference>
<dbReference type="InterPro" id="IPR020595">
    <property type="entry name" value="MnmG-rel_CS"/>
</dbReference>
<dbReference type="InterPro" id="IPR026904">
    <property type="entry name" value="MnmG_C"/>
</dbReference>
<dbReference type="InterPro" id="IPR047001">
    <property type="entry name" value="MnmG_C_subdom"/>
</dbReference>
<dbReference type="InterPro" id="IPR044920">
    <property type="entry name" value="MnmG_C_subdom_sf"/>
</dbReference>
<dbReference type="InterPro" id="IPR040131">
    <property type="entry name" value="MnmG_N"/>
</dbReference>
<dbReference type="NCBIfam" id="TIGR00136">
    <property type="entry name" value="mnmG_gidA"/>
    <property type="match status" value="1"/>
</dbReference>
<dbReference type="PANTHER" id="PTHR11806">
    <property type="entry name" value="GLUCOSE INHIBITED DIVISION PROTEIN A"/>
    <property type="match status" value="1"/>
</dbReference>
<dbReference type="PANTHER" id="PTHR11806:SF0">
    <property type="entry name" value="PROTEIN MTO1 HOMOLOG, MITOCHONDRIAL"/>
    <property type="match status" value="1"/>
</dbReference>
<dbReference type="Pfam" id="PF01134">
    <property type="entry name" value="GIDA"/>
    <property type="match status" value="1"/>
</dbReference>
<dbReference type="Pfam" id="PF21680">
    <property type="entry name" value="GIDA_C_1st"/>
    <property type="match status" value="1"/>
</dbReference>
<dbReference type="Pfam" id="PF13932">
    <property type="entry name" value="SAM_GIDA_C"/>
    <property type="match status" value="1"/>
</dbReference>
<dbReference type="PRINTS" id="PR00411">
    <property type="entry name" value="PNDRDTASEI"/>
</dbReference>
<dbReference type="SMART" id="SM01228">
    <property type="entry name" value="GIDA_assoc_3"/>
    <property type="match status" value="1"/>
</dbReference>
<dbReference type="SUPFAM" id="SSF51905">
    <property type="entry name" value="FAD/NAD(P)-binding domain"/>
    <property type="match status" value="1"/>
</dbReference>
<dbReference type="PROSITE" id="PS01280">
    <property type="entry name" value="GIDA_1"/>
    <property type="match status" value="1"/>
</dbReference>
<dbReference type="PROSITE" id="PS01281">
    <property type="entry name" value="GIDA_2"/>
    <property type="match status" value="1"/>
</dbReference>
<feature type="chain" id="PRO_1000095652" description="tRNA uridine 5-carboxymethylaminomethyl modification enzyme MnmG">
    <location>
        <begin position="1"/>
        <end position="621"/>
    </location>
</feature>
<feature type="binding site" evidence="1">
    <location>
        <begin position="11"/>
        <end position="16"/>
    </location>
    <ligand>
        <name>FAD</name>
        <dbReference type="ChEBI" id="CHEBI:57692"/>
    </ligand>
</feature>
<feature type="binding site" evidence="1">
    <location>
        <begin position="270"/>
        <end position="284"/>
    </location>
    <ligand>
        <name>NAD(+)</name>
        <dbReference type="ChEBI" id="CHEBI:57540"/>
    </ligand>
</feature>
<protein>
    <recommendedName>
        <fullName evidence="1">tRNA uridine 5-carboxymethylaminomethyl modification enzyme MnmG</fullName>
    </recommendedName>
    <alternativeName>
        <fullName evidence="1">Glucose-inhibited division protein A</fullName>
    </alternativeName>
</protein>
<proteinExistence type="inferred from homology"/>
<accession>B6JKE5</accession>
<reference key="1">
    <citation type="submission" date="2008-10" db="EMBL/GenBank/DDBJ databases">
        <title>The complete genome sequence of Helicobacter pylori strain P12.</title>
        <authorList>
            <person name="Fischer W."/>
            <person name="Windhager L."/>
            <person name="Karnholz A."/>
            <person name="Zeiller M."/>
            <person name="Zimmer R."/>
            <person name="Haas R."/>
        </authorList>
    </citation>
    <scope>NUCLEOTIDE SEQUENCE [LARGE SCALE GENOMIC DNA]</scope>
    <source>
        <strain>P12</strain>
    </source>
</reference>
<gene>
    <name evidence="1" type="primary">mnmG</name>
    <name evidence="1" type="synonym">gidA</name>
    <name type="ordered locus">HPP12_0214</name>
</gene>